<reference key="1">
    <citation type="journal article" date="1992" name="Plant Physiol.">
        <title>Posttranslational modifications in the amino-terminal region of the large subunit of ribulose-1,5-bisphosphate carboxylase/oxygenase from several plant species.</title>
        <authorList>
            <person name="Houtz R.L."/>
            <person name="Poneleit L."/>
            <person name="Jones S.B."/>
            <person name="Royer M."/>
            <person name="Stults J.T."/>
        </authorList>
    </citation>
    <scope>PROTEIN SEQUENCE</scope>
    <scope>METHYLATION AT LYS-12</scope>
    <scope>ACETYLATION AT PRO-1</scope>
</reference>
<sequence length="16" mass="1648">PQTETKASVGFKAGVK</sequence>
<organism>
    <name type="scientific">Capsicum annuum</name>
    <name type="common">Capsicum pepper</name>
    <dbReference type="NCBI Taxonomy" id="4072"/>
    <lineage>
        <taxon>Eukaryota</taxon>
        <taxon>Viridiplantae</taxon>
        <taxon>Streptophyta</taxon>
        <taxon>Embryophyta</taxon>
        <taxon>Tracheophyta</taxon>
        <taxon>Spermatophyta</taxon>
        <taxon>Magnoliopsida</taxon>
        <taxon>eudicotyledons</taxon>
        <taxon>Gunneridae</taxon>
        <taxon>Pentapetalae</taxon>
        <taxon>asterids</taxon>
        <taxon>lamiids</taxon>
        <taxon>Solanales</taxon>
        <taxon>Solanaceae</taxon>
        <taxon>Solanoideae</taxon>
        <taxon>Capsiceae</taxon>
        <taxon>Capsicum</taxon>
    </lineage>
</organism>
<proteinExistence type="evidence at protein level"/>
<protein>
    <recommendedName>
        <fullName>Ribulose bisphosphate carboxylase large chain</fullName>
        <shortName>RuBisCO large subunit</shortName>
        <ecNumber>4.1.1.39</ecNumber>
    </recommendedName>
</protein>
<comment type="function">
    <text>RuBisCO catalyzes two reactions: the carboxylation of D-ribulose 1,5-bisphosphate, the primary event in carbon dioxide fixation, as well as the oxidative fragmentation of the pentose substrate in the photorespiration process. Both reactions occur simultaneously and in competition at the same active site.</text>
</comment>
<comment type="catalytic activity">
    <reaction>
        <text>2 (2R)-3-phosphoglycerate + 2 H(+) = D-ribulose 1,5-bisphosphate + CO2 + H2O</text>
        <dbReference type="Rhea" id="RHEA:23124"/>
        <dbReference type="ChEBI" id="CHEBI:15377"/>
        <dbReference type="ChEBI" id="CHEBI:15378"/>
        <dbReference type="ChEBI" id="CHEBI:16526"/>
        <dbReference type="ChEBI" id="CHEBI:57870"/>
        <dbReference type="ChEBI" id="CHEBI:58272"/>
        <dbReference type="EC" id="4.1.1.39"/>
    </reaction>
</comment>
<comment type="catalytic activity">
    <reaction>
        <text>D-ribulose 1,5-bisphosphate + O2 = 2-phosphoglycolate + (2R)-3-phosphoglycerate + 2 H(+)</text>
        <dbReference type="Rhea" id="RHEA:36631"/>
        <dbReference type="ChEBI" id="CHEBI:15378"/>
        <dbReference type="ChEBI" id="CHEBI:15379"/>
        <dbReference type="ChEBI" id="CHEBI:57870"/>
        <dbReference type="ChEBI" id="CHEBI:58033"/>
        <dbReference type="ChEBI" id="CHEBI:58272"/>
    </reaction>
</comment>
<comment type="subunit">
    <text evidence="1">Heterohexadecamer of 8 large chains and 8 small chains.</text>
</comment>
<comment type="subcellular location">
    <subcellularLocation>
        <location>Plastid</location>
        <location>Chloroplast</location>
    </subcellularLocation>
</comment>
<comment type="miscellaneous">
    <text evidence="1">The basic functional RuBisCO is composed of a large chain homodimer in a 'head-to-tail' conformation. In form I RuBisCO this homodimer is arranged in a barrel-like tetramer with the small subunits forming a tetrameric 'cap' on each end of the 'barrel' (By similarity).</text>
</comment>
<comment type="similarity">
    <text evidence="3">Belongs to the RuBisCO large chain family. Type I subfamily.</text>
</comment>
<evidence type="ECO:0000250" key="1"/>
<evidence type="ECO:0000269" key="2">
    <source>
    </source>
</evidence>
<evidence type="ECO:0000305" key="3"/>
<accession>P27063</accession>
<name>RBL_CAPAN</name>
<feature type="chain" id="PRO_0000062395" description="Ribulose bisphosphate carboxylase large chain">
    <location>
        <begin position="1"/>
        <end position="16" status="greater than"/>
    </location>
</feature>
<feature type="modified residue" description="N-acetylproline" evidence="2">
    <location>
        <position position="1"/>
    </location>
</feature>
<feature type="modified residue" description="N6,N6,N6-trimethyllysine" evidence="2">
    <location>
        <position position="12"/>
    </location>
</feature>
<feature type="non-terminal residue">
    <location>
        <position position="16"/>
    </location>
</feature>
<keyword id="KW-0007">Acetylation</keyword>
<keyword id="KW-0113">Calvin cycle</keyword>
<keyword id="KW-0120">Carbon dioxide fixation</keyword>
<keyword id="KW-0150">Chloroplast</keyword>
<keyword id="KW-0903">Direct protein sequencing</keyword>
<keyword id="KW-0456">Lyase</keyword>
<keyword id="KW-0488">Methylation</keyword>
<keyword id="KW-0503">Monooxygenase</keyword>
<keyword id="KW-0560">Oxidoreductase</keyword>
<keyword id="KW-0601">Photorespiration</keyword>
<keyword id="KW-0602">Photosynthesis</keyword>
<keyword id="KW-0934">Plastid</keyword>
<geneLocation type="chloroplast"/>
<dbReference type="EC" id="4.1.1.39"/>
<dbReference type="iPTMnet" id="P27063"/>
<dbReference type="GO" id="GO:0009507">
    <property type="term" value="C:chloroplast"/>
    <property type="evidence" value="ECO:0007669"/>
    <property type="project" value="UniProtKB-SubCell"/>
</dbReference>
<dbReference type="GO" id="GO:0004497">
    <property type="term" value="F:monooxygenase activity"/>
    <property type="evidence" value="ECO:0007669"/>
    <property type="project" value="UniProtKB-KW"/>
</dbReference>
<dbReference type="GO" id="GO:0016984">
    <property type="term" value="F:ribulose-bisphosphate carboxylase activity"/>
    <property type="evidence" value="ECO:0007669"/>
    <property type="project" value="UniProtKB-EC"/>
</dbReference>
<dbReference type="GO" id="GO:0009853">
    <property type="term" value="P:photorespiration"/>
    <property type="evidence" value="ECO:0007669"/>
    <property type="project" value="UniProtKB-KW"/>
</dbReference>
<dbReference type="GO" id="GO:0019253">
    <property type="term" value="P:reductive pentose-phosphate cycle"/>
    <property type="evidence" value="ECO:0007669"/>
    <property type="project" value="UniProtKB-KW"/>
</dbReference>
<gene>
    <name type="primary">rbcL</name>
</gene>